<protein>
    <recommendedName>
        <fullName evidence="1">Phosphoserine aminotransferase</fullName>
        <ecNumber evidence="1">2.6.1.52</ecNumber>
    </recommendedName>
    <alternativeName>
        <fullName evidence="1">Phosphohydroxythreonine aminotransferase</fullName>
        <shortName evidence="1">PSAT</shortName>
    </alternativeName>
</protein>
<feature type="chain" id="PRO_1000203557" description="Phosphoserine aminotransferase">
    <location>
        <begin position="1"/>
        <end position="362"/>
    </location>
</feature>
<feature type="binding site" evidence="1">
    <location>
        <position position="9"/>
    </location>
    <ligand>
        <name>L-glutamate</name>
        <dbReference type="ChEBI" id="CHEBI:29985"/>
    </ligand>
</feature>
<feature type="binding site" evidence="1">
    <location>
        <position position="42"/>
    </location>
    <ligand>
        <name>L-glutamate</name>
        <dbReference type="ChEBI" id="CHEBI:29985"/>
    </ligand>
</feature>
<feature type="binding site" evidence="1">
    <location>
        <begin position="76"/>
        <end position="77"/>
    </location>
    <ligand>
        <name>pyridoxal 5'-phosphate</name>
        <dbReference type="ChEBI" id="CHEBI:597326"/>
    </ligand>
</feature>
<feature type="binding site" evidence="1">
    <location>
        <position position="102"/>
    </location>
    <ligand>
        <name>pyridoxal 5'-phosphate</name>
        <dbReference type="ChEBI" id="CHEBI:597326"/>
    </ligand>
</feature>
<feature type="binding site" evidence="1">
    <location>
        <position position="153"/>
    </location>
    <ligand>
        <name>pyridoxal 5'-phosphate</name>
        <dbReference type="ChEBI" id="CHEBI:597326"/>
    </ligand>
</feature>
<feature type="binding site" evidence="1">
    <location>
        <position position="174"/>
    </location>
    <ligand>
        <name>pyridoxal 5'-phosphate</name>
        <dbReference type="ChEBI" id="CHEBI:597326"/>
    </ligand>
</feature>
<feature type="binding site" evidence="1">
    <location>
        <position position="197"/>
    </location>
    <ligand>
        <name>pyridoxal 5'-phosphate</name>
        <dbReference type="ChEBI" id="CHEBI:597326"/>
    </ligand>
</feature>
<feature type="binding site" evidence="1">
    <location>
        <begin position="239"/>
        <end position="240"/>
    </location>
    <ligand>
        <name>pyridoxal 5'-phosphate</name>
        <dbReference type="ChEBI" id="CHEBI:597326"/>
    </ligand>
</feature>
<feature type="modified residue" description="N6-(pyridoxal phosphate)lysine" evidence="1">
    <location>
        <position position="198"/>
    </location>
</feature>
<accession>A9N7V7</accession>
<comment type="function">
    <text evidence="1">Catalyzes the reversible conversion of 3-phosphohydroxypyruvate to phosphoserine and of 3-hydroxy-2-oxo-4-phosphonooxybutanoate to phosphohydroxythreonine.</text>
</comment>
<comment type="catalytic activity">
    <reaction evidence="1">
        <text>O-phospho-L-serine + 2-oxoglutarate = 3-phosphooxypyruvate + L-glutamate</text>
        <dbReference type="Rhea" id="RHEA:14329"/>
        <dbReference type="ChEBI" id="CHEBI:16810"/>
        <dbReference type="ChEBI" id="CHEBI:18110"/>
        <dbReference type="ChEBI" id="CHEBI:29985"/>
        <dbReference type="ChEBI" id="CHEBI:57524"/>
        <dbReference type="EC" id="2.6.1.52"/>
    </reaction>
</comment>
<comment type="catalytic activity">
    <reaction evidence="1">
        <text>4-(phosphooxy)-L-threonine + 2-oxoglutarate = (R)-3-hydroxy-2-oxo-4-phosphooxybutanoate + L-glutamate</text>
        <dbReference type="Rhea" id="RHEA:16573"/>
        <dbReference type="ChEBI" id="CHEBI:16810"/>
        <dbReference type="ChEBI" id="CHEBI:29985"/>
        <dbReference type="ChEBI" id="CHEBI:58452"/>
        <dbReference type="ChEBI" id="CHEBI:58538"/>
        <dbReference type="EC" id="2.6.1.52"/>
    </reaction>
</comment>
<comment type="cofactor">
    <cofactor evidence="1">
        <name>pyridoxal 5'-phosphate</name>
        <dbReference type="ChEBI" id="CHEBI:597326"/>
    </cofactor>
    <text evidence="1">Binds 1 pyridoxal phosphate per subunit.</text>
</comment>
<comment type="pathway">
    <text evidence="1">Amino-acid biosynthesis; L-serine biosynthesis; L-serine from 3-phospho-D-glycerate: step 2/3.</text>
</comment>
<comment type="pathway">
    <text evidence="1">Cofactor biosynthesis; pyridoxine 5'-phosphate biosynthesis; pyridoxine 5'-phosphate from D-erythrose 4-phosphate: step 3/5.</text>
</comment>
<comment type="subunit">
    <text evidence="1">Homodimer.</text>
</comment>
<comment type="subcellular location">
    <subcellularLocation>
        <location evidence="1">Cytoplasm</location>
    </subcellularLocation>
</comment>
<comment type="similarity">
    <text evidence="1">Belongs to the class-V pyridoxal-phosphate-dependent aminotransferase family. SerC subfamily.</text>
</comment>
<reference key="1">
    <citation type="submission" date="2007-11" db="EMBL/GenBank/DDBJ databases">
        <authorList>
            <consortium name="The Salmonella enterica serovar Paratyphi B Genome Sequencing Project"/>
            <person name="McClelland M."/>
            <person name="Sanderson E.K."/>
            <person name="Porwollik S."/>
            <person name="Spieth J."/>
            <person name="Clifton W.S."/>
            <person name="Fulton R."/>
            <person name="Cordes M."/>
            <person name="Wollam A."/>
            <person name="Shah N."/>
            <person name="Pepin K."/>
            <person name="Bhonagiri V."/>
            <person name="Nash W."/>
            <person name="Johnson M."/>
            <person name="Thiruvilangam P."/>
            <person name="Wilson R."/>
        </authorList>
    </citation>
    <scope>NUCLEOTIDE SEQUENCE [LARGE SCALE GENOMIC DNA]</scope>
    <source>
        <strain>ATCC BAA-1250 / SPB7</strain>
    </source>
</reference>
<keyword id="KW-0028">Amino-acid biosynthesis</keyword>
<keyword id="KW-0032">Aminotransferase</keyword>
<keyword id="KW-0963">Cytoplasm</keyword>
<keyword id="KW-0663">Pyridoxal phosphate</keyword>
<keyword id="KW-0664">Pyridoxine biosynthesis</keyword>
<keyword id="KW-0718">Serine biosynthesis</keyword>
<keyword id="KW-0808">Transferase</keyword>
<proteinExistence type="inferred from homology"/>
<evidence type="ECO:0000255" key="1">
    <source>
        <dbReference type="HAMAP-Rule" id="MF_00160"/>
    </source>
</evidence>
<name>SERC_SALPB</name>
<sequence length="362" mass="39855">MAQVFNFSSGPAMLPAEVLKLAQQELRDWHGLGTSVMEISHRGKEFIQVAEEAEQDFRDLLNIPSNYKVLFCHGGGRGQFAGVPLNLLGDKTTADYVDAGYWAASAIKEAKKYCAPQIIDAKITVDGKRAVKPMREWQLSDNAAYLHYCPNETIDGIAIDETPDFGPEVVVTADFSSTILSAPLDVSRYGVIYAGAQKNIGPAGLTLVIVREDLLGKAHESCPSILDYTVLNDNDSMFNTPPTFAWYLSGLVFKWLKAQGGVAAMHKINQQKAELLYGVIDNSDFYRNDVAQANRSRMNVPFQLADNALDKVFLEESFAAGLHALKGHRVVGGMRASIYNAMPIEGVKALTDFMIDFERRHG</sequence>
<gene>
    <name evidence="1" type="primary">serC</name>
    <name type="ordered locus">SPAB_02539</name>
</gene>
<dbReference type="EC" id="2.6.1.52" evidence="1"/>
<dbReference type="EMBL" id="CP000886">
    <property type="protein sequence ID" value="ABX67919.1"/>
    <property type="molecule type" value="Genomic_DNA"/>
</dbReference>
<dbReference type="RefSeq" id="WP_000079590.1">
    <property type="nucleotide sequence ID" value="NC_010102.1"/>
</dbReference>
<dbReference type="SMR" id="A9N7V7"/>
<dbReference type="KEGG" id="spq:SPAB_02539"/>
<dbReference type="PATRIC" id="fig|1016998.12.peg.2405"/>
<dbReference type="HOGENOM" id="CLU_034866_0_2_6"/>
<dbReference type="BioCyc" id="SENT1016998:SPAB_RS10320-MONOMER"/>
<dbReference type="UniPathway" id="UPA00135">
    <property type="reaction ID" value="UER00197"/>
</dbReference>
<dbReference type="UniPathway" id="UPA00244">
    <property type="reaction ID" value="UER00311"/>
</dbReference>
<dbReference type="Proteomes" id="UP000008556">
    <property type="component" value="Chromosome"/>
</dbReference>
<dbReference type="GO" id="GO:0005737">
    <property type="term" value="C:cytoplasm"/>
    <property type="evidence" value="ECO:0007669"/>
    <property type="project" value="UniProtKB-SubCell"/>
</dbReference>
<dbReference type="GO" id="GO:0004648">
    <property type="term" value="F:O-phospho-L-serine:2-oxoglutarate aminotransferase activity"/>
    <property type="evidence" value="ECO:0007669"/>
    <property type="project" value="UniProtKB-UniRule"/>
</dbReference>
<dbReference type="GO" id="GO:0030170">
    <property type="term" value="F:pyridoxal phosphate binding"/>
    <property type="evidence" value="ECO:0007669"/>
    <property type="project" value="UniProtKB-UniRule"/>
</dbReference>
<dbReference type="GO" id="GO:0006564">
    <property type="term" value="P:L-serine biosynthetic process"/>
    <property type="evidence" value="ECO:0007669"/>
    <property type="project" value="UniProtKB-UniRule"/>
</dbReference>
<dbReference type="GO" id="GO:0008615">
    <property type="term" value="P:pyridoxine biosynthetic process"/>
    <property type="evidence" value="ECO:0007669"/>
    <property type="project" value="UniProtKB-UniRule"/>
</dbReference>
<dbReference type="CDD" id="cd00611">
    <property type="entry name" value="PSAT_like"/>
    <property type="match status" value="1"/>
</dbReference>
<dbReference type="FunFam" id="3.40.640.10:FF:000010">
    <property type="entry name" value="Phosphoserine aminotransferase"/>
    <property type="match status" value="1"/>
</dbReference>
<dbReference type="FunFam" id="3.90.1150.10:FF:000006">
    <property type="entry name" value="Phosphoserine aminotransferase"/>
    <property type="match status" value="1"/>
</dbReference>
<dbReference type="Gene3D" id="3.90.1150.10">
    <property type="entry name" value="Aspartate Aminotransferase, domain 1"/>
    <property type="match status" value="1"/>
</dbReference>
<dbReference type="Gene3D" id="3.40.640.10">
    <property type="entry name" value="Type I PLP-dependent aspartate aminotransferase-like (Major domain)"/>
    <property type="match status" value="1"/>
</dbReference>
<dbReference type="HAMAP" id="MF_00160">
    <property type="entry name" value="SerC_aminotrans_5"/>
    <property type="match status" value="1"/>
</dbReference>
<dbReference type="InterPro" id="IPR000192">
    <property type="entry name" value="Aminotrans_V_dom"/>
</dbReference>
<dbReference type="InterPro" id="IPR020578">
    <property type="entry name" value="Aminotrans_V_PyrdxlP_BS"/>
</dbReference>
<dbReference type="InterPro" id="IPR022278">
    <property type="entry name" value="Pser_aminoTfrase"/>
</dbReference>
<dbReference type="InterPro" id="IPR015424">
    <property type="entry name" value="PyrdxlP-dep_Trfase"/>
</dbReference>
<dbReference type="InterPro" id="IPR015421">
    <property type="entry name" value="PyrdxlP-dep_Trfase_major"/>
</dbReference>
<dbReference type="InterPro" id="IPR015422">
    <property type="entry name" value="PyrdxlP-dep_Trfase_small"/>
</dbReference>
<dbReference type="NCBIfam" id="NF003764">
    <property type="entry name" value="PRK05355.1"/>
    <property type="match status" value="1"/>
</dbReference>
<dbReference type="NCBIfam" id="TIGR01364">
    <property type="entry name" value="serC_1"/>
    <property type="match status" value="1"/>
</dbReference>
<dbReference type="PANTHER" id="PTHR43247">
    <property type="entry name" value="PHOSPHOSERINE AMINOTRANSFERASE"/>
    <property type="match status" value="1"/>
</dbReference>
<dbReference type="PANTHER" id="PTHR43247:SF1">
    <property type="entry name" value="PHOSPHOSERINE AMINOTRANSFERASE"/>
    <property type="match status" value="1"/>
</dbReference>
<dbReference type="Pfam" id="PF00266">
    <property type="entry name" value="Aminotran_5"/>
    <property type="match status" value="1"/>
</dbReference>
<dbReference type="PIRSF" id="PIRSF000525">
    <property type="entry name" value="SerC"/>
    <property type="match status" value="1"/>
</dbReference>
<dbReference type="SUPFAM" id="SSF53383">
    <property type="entry name" value="PLP-dependent transferases"/>
    <property type="match status" value="1"/>
</dbReference>
<dbReference type="PROSITE" id="PS00595">
    <property type="entry name" value="AA_TRANSFER_CLASS_5"/>
    <property type="match status" value="1"/>
</dbReference>
<organism>
    <name type="scientific">Salmonella paratyphi B (strain ATCC BAA-1250 / SPB7)</name>
    <dbReference type="NCBI Taxonomy" id="1016998"/>
    <lineage>
        <taxon>Bacteria</taxon>
        <taxon>Pseudomonadati</taxon>
        <taxon>Pseudomonadota</taxon>
        <taxon>Gammaproteobacteria</taxon>
        <taxon>Enterobacterales</taxon>
        <taxon>Enterobacteriaceae</taxon>
        <taxon>Salmonella</taxon>
    </lineage>
</organism>